<feature type="signal peptide" evidence="1">
    <location>
        <begin position="1"/>
        <end position="25"/>
    </location>
</feature>
<feature type="chain" id="PRO_0000414477" description="Lipid A acyltransferase PagP">
    <location>
        <begin position="26"/>
        <end position="186"/>
    </location>
</feature>
<feature type="active site" evidence="1">
    <location>
        <position position="58"/>
    </location>
</feature>
<feature type="active site" evidence="1">
    <location>
        <position position="101"/>
    </location>
</feature>
<feature type="active site" evidence="1">
    <location>
        <position position="102"/>
    </location>
</feature>
<feature type="site" description="Role in lipopolysaccharide recognition" evidence="1">
    <location>
        <position position="67"/>
    </location>
</feature>
<feature type="site" description="Role in the phospholipid gating" evidence="1">
    <location>
        <position position="172"/>
    </location>
</feature>
<reference key="1">
    <citation type="journal article" date="2010" name="J. Clin. Microbiol.">
        <title>Emergence of a new multidrug-resistant serotype X variant in an epidemic clone of Shigella flexneri.</title>
        <authorList>
            <person name="Ye C."/>
            <person name="Lan R."/>
            <person name="Xia S."/>
            <person name="Zhang J."/>
            <person name="Sun Q."/>
            <person name="Zhang S."/>
            <person name="Jing H."/>
            <person name="Wang L."/>
            <person name="Li Z."/>
            <person name="Zhou Z."/>
            <person name="Zhao A."/>
            <person name="Cui Z."/>
            <person name="Cao J."/>
            <person name="Jin D."/>
            <person name="Huang L."/>
            <person name="Wang Y."/>
            <person name="Luo X."/>
            <person name="Bai X."/>
            <person name="Wang Y."/>
            <person name="Wang P."/>
            <person name="Xu Q."/>
            <person name="Xu J."/>
        </authorList>
    </citation>
    <scope>NUCLEOTIDE SEQUENCE [LARGE SCALE GENOMIC DNA]</scope>
    <source>
        <strain>2002017</strain>
    </source>
</reference>
<evidence type="ECO:0000255" key="1">
    <source>
        <dbReference type="HAMAP-Rule" id="MF_00837"/>
    </source>
</evidence>
<evidence type="ECO:0000305" key="2"/>
<keyword id="KW-0012">Acyltransferase</keyword>
<keyword id="KW-0998">Cell outer membrane</keyword>
<keyword id="KW-0472">Membrane</keyword>
<keyword id="KW-0732">Signal</keyword>
<keyword id="KW-0808">Transferase</keyword>
<organism>
    <name type="scientific">Shigella flexneri serotype X (strain 2002017)</name>
    <dbReference type="NCBI Taxonomy" id="591020"/>
    <lineage>
        <taxon>Bacteria</taxon>
        <taxon>Pseudomonadati</taxon>
        <taxon>Pseudomonadota</taxon>
        <taxon>Gammaproteobacteria</taxon>
        <taxon>Enterobacterales</taxon>
        <taxon>Enterobacteriaceae</taxon>
        <taxon>Shigella</taxon>
    </lineage>
</organism>
<dbReference type="EC" id="2.3.1.251" evidence="1"/>
<dbReference type="EMBL" id="CP001383">
    <property type="protein sequence ID" value="ADA73024.1"/>
    <property type="status" value="ALT_INIT"/>
    <property type="molecule type" value="Genomic_DNA"/>
</dbReference>
<dbReference type="RefSeq" id="WP_005049488.1">
    <property type="nucleotide sequence ID" value="NC_017328.1"/>
</dbReference>
<dbReference type="BMRB" id="D2AA19"/>
<dbReference type="SMR" id="D2AA19"/>
<dbReference type="KEGG" id="sfe:SFxv_0725"/>
<dbReference type="PATRIC" id="fig|591020.3.peg.768"/>
<dbReference type="HOGENOM" id="CLU_104099_0_0_6"/>
<dbReference type="GO" id="GO:0009279">
    <property type="term" value="C:cell outer membrane"/>
    <property type="evidence" value="ECO:0007669"/>
    <property type="project" value="UniProtKB-SubCell"/>
</dbReference>
<dbReference type="GO" id="GO:0016746">
    <property type="term" value="F:acyltransferase activity"/>
    <property type="evidence" value="ECO:0007669"/>
    <property type="project" value="UniProtKB-UniRule"/>
</dbReference>
<dbReference type="GO" id="GO:0009245">
    <property type="term" value="P:lipid A biosynthetic process"/>
    <property type="evidence" value="ECO:0007669"/>
    <property type="project" value="UniProtKB-UniRule"/>
</dbReference>
<dbReference type="FunFam" id="2.40.160.20:FF:000002">
    <property type="entry name" value="Lipid A palmitoyltransferase PagP"/>
    <property type="match status" value="1"/>
</dbReference>
<dbReference type="Gene3D" id="2.40.160.20">
    <property type="match status" value="1"/>
</dbReference>
<dbReference type="HAMAP" id="MF_00837">
    <property type="entry name" value="PagP_transferase"/>
    <property type="match status" value="1"/>
</dbReference>
<dbReference type="InterPro" id="IPR009746">
    <property type="entry name" value="LipidA_acyl_PagP"/>
</dbReference>
<dbReference type="InterPro" id="IPR011250">
    <property type="entry name" value="OMP/PagP_b-brl"/>
</dbReference>
<dbReference type="NCBIfam" id="NF008271">
    <property type="entry name" value="PRK11045.1"/>
    <property type="match status" value="1"/>
</dbReference>
<dbReference type="Pfam" id="PF07017">
    <property type="entry name" value="PagP"/>
    <property type="match status" value="1"/>
</dbReference>
<dbReference type="SUPFAM" id="SSF56925">
    <property type="entry name" value="OMPA-like"/>
    <property type="match status" value="1"/>
</dbReference>
<sequence length="186" mass="21740">MNVSKYVAIFSFVFIQLISVGKVFANADERMTTFRENIAQTWQQPEHYDLYIPAITWHARFAYDKEKTDRYNERPWGGGFGLSRWDEKGNWHGLYAMAFKDSWNKWEPIAGYGWESTWRPLADENFHLGLGFTAGVTARDNWNYIPLPVLLPLASVGYGPVTFQMTYIPGTYNNGNVYFAWMRFQF</sequence>
<accession>D2AA19</accession>
<name>PAGP_SHIF2</name>
<gene>
    <name evidence="1" type="primary">pagP</name>
    <name type="ordered locus">SFxv_0725</name>
</gene>
<protein>
    <recommendedName>
        <fullName evidence="1">Lipid A acyltransferase PagP</fullName>
        <ecNumber evidence="1">2.3.1.251</ecNumber>
    </recommendedName>
    <alternativeName>
        <fullName evidence="1">Lipid A acylation protein</fullName>
    </alternativeName>
</protein>
<proteinExistence type="inferred from homology"/>
<comment type="function">
    <text evidence="1">Transfers a fatty acid residue from the sn-1 position of a phospholipid to the N-linked hydroxyfatty acid chain on the proximal unit of lipid A or its precursors.</text>
</comment>
<comment type="catalytic activity">
    <reaction evidence="1">
        <text>a lipid A + a 1,2-diacyl-sn-glycero-3-phosphocholine = a hepta-acyl lipid A + a 2-acyl-sn-glycero-3-phosphocholine</text>
        <dbReference type="Rhea" id="RHEA:74275"/>
        <dbReference type="ChEBI" id="CHEBI:57643"/>
        <dbReference type="ChEBI" id="CHEBI:57875"/>
        <dbReference type="ChEBI" id="CHEBI:193141"/>
        <dbReference type="ChEBI" id="CHEBI:193142"/>
        <dbReference type="EC" id="2.3.1.251"/>
    </reaction>
</comment>
<comment type="catalytic activity">
    <reaction evidence="1">
        <text>a lipid IVA + a 1,2-diacyl-sn-glycero-3-phosphocholine = a lipid IVB + a 2-acyl-sn-glycero-3-phosphocholine</text>
        <dbReference type="Rhea" id="RHEA:74279"/>
        <dbReference type="ChEBI" id="CHEBI:57643"/>
        <dbReference type="ChEBI" id="CHEBI:57875"/>
        <dbReference type="ChEBI" id="CHEBI:176425"/>
        <dbReference type="ChEBI" id="CHEBI:193143"/>
        <dbReference type="EC" id="2.3.1.251"/>
    </reaction>
</comment>
<comment type="catalytic activity">
    <reaction evidence="1">
        <text>a lipid IIA + a 1,2-diacyl-sn-glycero-3-phosphocholine = a lipid IIB + a 2-acyl-sn-glycero-3-phosphocholine</text>
        <dbReference type="Rhea" id="RHEA:74283"/>
        <dbReference type="ChEBI" id="CHEBI:57643"/>
        <dbReference type="ChEBI" id="CHEBI:57875"/>
        <dbReference type="ChEBI" id="CHEBI:193144"/>
        <dbReference type="ChEBI" id="CHEBI:193145"/>
        <dbReference type="EC" id="2.3.1.251"/>
    </reaction>
</comment>
<comment type="subunit">
    <text evidence="1">Homodimer.</text>
</comment>
<comment type="subcellular location">
    <subcellularLocation>
        <location evidence="1">Cell outer membrane</location>
    </subcellularLocation>
</comment>
<comment type="similarity">
    <text evidence="1">Belongs to the lipid A palmitoyltransferase family.</text>
</comment>
<comment type="sequence caution" evidence="2">
    <conflict type="erroneous initiation">
        <sequence resource="EMBL-CDS" id="ADA73024"/>
    </conflict>
    <text>Extended N-terminus.</text>
</comment>